<keyword id="KW-0067">ATP-binding</keyword>
<keyword id="KW-0235">DNA replication</keyword>
<keyword id="KW-0238">DNA-binding</keyword>
<keyword id="KW-0244">Early protein</keyword>
<keyword id="KW-0347">Helicase</keyword>
<keyword id="KW-1048">Host nucleus</keyword>
<keyword id="KW-0378">Hydrolase</keyword>
<keyword id="KW-0413">Isomerase</keyword>
<keyword id="KW-1017">Isopeptide bond</keyword>
<keyword id="KW-0547">Nucleotide-binding</keyword>
<keyword id="KW-0597">Phosphoprotein</keyword>
<keyword id="KW-1185">Reference proteome</keyword>
<keyword id="KW-0832">Ubl conjugation</keyword>
<dbReference type="EC" id="5.6.2.4" evidence="1"/>
<dbReference type="EMBL" id="U37488">
    <property type="protein sequence ID" value="AAA79189.1"/>
    <property type="molecule type" value="Genomic_DNA"/>
</dbReference>
<dbReference type="RefSeq" id="NP_043290.1">
    <property type="nucleotide sequence ID" value="NC_001676.1"/>
</dbReference>
<dbReference type="SMR" id="Q81020"/>
<dbReference type="GeneID" id="1497434"/>
<dbReference type="KEGG" id="vg:1497434"/>
<dbReference type="OrthoDB" id="4795at10239"/>
<dbReference type="Proteomes" id="UP000007665">
    <property type="component" value="Segment"/>
</dbReference>
<dbReference type="GO" id="GO:0042025">
    <property type="term" value="C:host cell nucleus"/>
    <property type="evidence" value="ECO:0007669"/>
    <property type="project" value="UniProtKB-SubCell"/>
</dbReference>
<dbReference type="GO" id="GO:0005524">
    <property type="term" value="F:ATP binding"/>
    <property type="evidence" value="ECO:0007669"/>
    <property type="project" value="UniProtKB-UniRule"/>
</dbReference>
<dbReference type="GO" id="GO:0016887">
    <property type="term" value="F:ATP hydrolysis activity"/>
    <property type="evidence" value="ECO:0007669"/>
    <property type="project" value="RHEA"/>
</dbReference>
<dbReference type="GO" id="GO:0003677">
    <property type="term" value="F:DNA binding"/>
    <property type="evidence" value="ECO:0007669"/>
    <property type="project" value="UniProtKB-UniRule"/>
</dbReference>
<dbReference type="GO" id="GO:0003678">
    <property type="term" value="F:DNA helicase activity"/>
    <property type="evidence" value="ECO:0007669"/>
    <property type="project" value="UniProtKB-UniRule"/>
</dbReference>
<dbReference type="GO" id="GO:0006260">
    <property type="term" value="P:DNA replication"/>
    <property type="evidence" value="ECO:0007669"/>
    <property type="project" value="UniProtKB-UniRule"/>
</dbReference>
<dbReference type="Gene3D" id="3.40.1310.10">
    <property type="match status" value="1"/>
</dbReference>
<dbReference type="Gene3D" id="3.40.50.300">
    <property type="entry name" value="P-loop containing nucleotide triphosphate hydrolases"/>
    <property type="match status" value="1"/>
</dbReference>
<dbReference type="Gene3D" id="1.10.10.510">
    <property type="entry name" value="Zinc finger, large T-antigen D1 domain"/>
    <property type="match status" value="1"/>
</dbReference>
<dbReference type="HAMAP" id="MF_04000">
    <property type="entry name" value="PPV_E1"/>
    <property type="match status" value="1"/>
</dbReference>
<dbReference type="InterPro" id="IPR014015">
    <property type="entry name" value="Helicase_SF3_DNA-vir"/>
</dbReference>
<dbReference type="InterPro" id="IPR027417">
    <property type="entry name" value="P-loop_NTPase"/>
</dbReference>
<dbReference type="InterPro" id="IPR001177">
    <property type="entry name" value="PPV_DNA_helicase_E1_C"/>
</dbReference>
<dbReference type="InterPro" id="IPR014000">
    <property type="entry name" value="PPV_DNA_helicase_E1_N"/>
</dbReference>
<dbReference type="InterPro" id="IPR046832">
    <property type="entry name" value="PPV_E1_DBD"/>
</dbReference>
<dbReference type="InterPro" id="IPR046935">
    <property type="entry name" value="PPV_E1_DBD_sf"/>
</dbReference>
<dbReference type="InterPro" id="IPR016393">
    <property type="entry name" value="Rep_E1_papillomaV"/>
</dbReference>
<dbReference type="InterPro" id="IPR037102">
    <property type="entry name" value="Znf_lg_T-Ag_D1_dom_sf"/>
</dbReference>
<dbReference type="Pfam" id="PF00519">
    <property type="entry name" value="PPV_E1_C"/>
    <property type="match status" value="1"/>
</dbReference>
<dbReference type="Pfam" id="PF20450">
    <property type="entry name" value="PPV_E1_DBD"/>
    <property type="match status" value="1"/>
</dbReference>
<dbReference type="Pfam" id="PF00524">
    <property type="entry name" value="PPV_E1_N"/>
    <property type="match status" value="1"/>
</dbReference>
<dbReference type="PIRSF" id="PIRSF003383">
    <property type="entry name" value="Rep_E1_papillomaV"/>
    <property type="match status" value="1"/>
</dbReference>
<dbReference type="SUPFAM" id="SSF55464">
    <property type="entry name" value="Origin of replication-binding domain, RBD-like"/>
    <property type="match status" value="1"/>
</dbReference>
<dbReference type="SUPFAM" id="SSF52540">
    <property type="entry name" value="P-loop containing nucleoside triphosphate hydrolases"/>
    <property type="match status" value="1"/>
</dbReference>
<dbReference type="PROSITE" id="PS51206">
    <property type="entry name" value="SF3_HELICASE_1"/>
    <property type="match status" value="1"/>
</dbReference>
<organismHost>
    <name type="scientific">Homo sapiens</name>
    <name type="common">Human</name>
    <dbReference type="NCBI Taxonomy" id="9606"/>
</organismHost>
<comment type="function">
    <text evidence="1">ATP-dependent DNA 3'-5' helicase required for initiation of viral DNA replication. It forms a complex with the viral E2 protein. The E1-E2 complex binds to the replication origin which contains binding sites for both proteins. During the initial step, a dimer of E1 interacts with a dimer of protein E2 leading to a complex that binds the viral origin of replication with high specificity. Then, a second dimer of E1 displaces the E2 dimer in an ATP-dependent manner to form the E1 tetramer. Following this, two E1 monomers are added to each half of the site, which results in the formation of two E1 trimers on the viral ori. Subsequently, two hexamers will be created. The double hexamer acts as a bi-directional helicase machinery and unwinds the viral DNA and then recruits the host DNA polymerase to start replication.</text>
</comment>
<comment type="catalytic activity">
    <reaction evidence="1">
        <text>Couples ATP hydrolysis with the unwinding of duplex DNA by translocating in the 3'-5' direction.</text>
        <dbReference type="EC" id="5.6.2.4"/>
    </reaction>
</comment>
<comment type="catalytic activity">
    <reaction evidence="1">
        <text>ATP + H2O = ADP + phosphate + H(+)</text>
        <dbReference type="Rhea" id="RHEA:13065"/>
        <dbReference type="ChEBI" id="CHEBI:15377"/>
        <dbReference type="ChEBI" id="CHEBI:15378"/>
        <dbReference type="ChEBI" id="CHEBI:30616"/>
        <dbReference type="ChEBI" id="CHEBI:43474"/>
        <dbReference type="ChEBI" id="CHEBI:456216"/>
        <dbReference type="EC" id="5.6.2.4"/>
    </reaction>
</comment>
<comment type="subunit">
    <text evidence="1">Can form hexamers. Interacts with E2 protein; this interaction increases E1 DNA binding specificity. Interacts with host DNA polymerase subunit POLA2. Interacts with host single stranded DNA-binding protein RPA1. Interacts with host TOP1; this interaction stimulates the enzymatic activity of TOP1.</text>
</comment>
<comment type="subcellular location">
    <subcellularLocation>
        <location evidence="1">Host nucleus</location>
    </subcellularLocation>
</comment>
<comment type="PTM">
    <text evidence="1">Phosphorylated.</text>
</comment>
<comment type="PTM">
    <text evidence="1">Sumoylated.</text>
</comment>
<comment type="similarity">
    <text evidence="1">Belongs to the papillomaviridae E1 protein family.</text>
</comment>
<gene>
    <name evidence="1" type="primary">E1</name>
</gene>
<sequence>MADNQGTEEEGTGCNGWFFVEAIVERKTGDIISDDEPEDVEDSGLDMVDFIDNSVSQVEGQENPQALLHAQQLQADVEAVQQLKRKYIGSPYVSPVANSEPCVEKDLSPRLGAISLGRRSAKAKRRLFDKAQPPPNGHTDVEAAVEVNTEGTDETETDQVQTVSGETTTDSLGRQQITELIHNTNIRVALFGMFKDLYGLSFMDLARPFKSDKTVCTDWVIAAFGIYHGITDGFKTLLEPHCLYGHIQWLTCRWGMVLLLLTRFKCGKNRLTVSKCLGMLLNIPETQMLIDPPKLRTPAAALYWYRQGLSNASEIFGTPPEWLARQTVIEYSLADSQFDLSKMVQWAYDHNYIDDSIIALEYAKLADIDENAAAFLGSNCQAKYVKDCGTMCRHYIRAQKMQMTMSQWIKHRCDLVEEEGEWKEIVRFLRYQHVDFISFMIALKQFLQGIPKHNCILLYGPPDTGKSNFAMSLISFLGGVVLSYVNSSSHFWLEPLADAKIAMLDDATTQCWNYMDIYMRNALDGNPMCFDRKHRAMVQTKCPPLIVTSNINASTDDRWRYLHSRVKCFCFPNRFPFDSNGNPVYDLSNKNWKSFFKRSWSRLALNDNDNEEEENGDPSNTFRCVPGKASRPI</sequence>
<proteinExistence type="inferred from homology"/>
<feature type="chain" id="PRO_0000133149" description="Replication protein E1">
    <location>
        <begin position="1"/>
        <end position="633"/>
    </location>
</feature>
<feature type="domain" description="SF3 helicase" evidence="1">
    <location>
        <begin position="434"/>
        <end position="584"/>
    </location>
</feature>
<feature type="region of interest" description="Disordered" evidence="2">
    <location>
        <begin position="148"/>
        <end position="168"/>
    </location>
</feature>
<feature type="region of interest" description="DNA-binding region" evidence="1">
    <location>
        <begin position="169"/>
        <end position="335"/>
    </location>
</feature>
<feature type="region of interest" description="Disordered" evidence="2">
    <location>
        <begin position="609"/>
        <end position="633"/>
    </location>
</feature>
<feature type="short sequence motif" description="Nuclear localization signal" evidence="1">
    <location>
        <begin position="84"/>
        <end position="86"/>
    </location>
</feature>
<feature type="short sequence motif" description="Nuclear export signal" evidence="1">
    <location>
        <begin position="107"/>
        <end position="116"/>
    </location>
</feature>
<feature type="compositionally biased region" description="Polar residues" evidence="2">
    <location>
        <begin position="158"/>
        <end position="168"/>
    </location>
</feature>
<feature type="binding site" evidence="1">
    <location>
        <begin position="460"/>
        <end position="467"/>
    </location>
    <ligand>
        <name>ATP</name>
        <dbReference type="ChEBI" id="CHEBI:30616"/>
    </ligand>
</feature>
<feature type="modified residue" description="Phosphoserine; by host" evidence="1">
    <location>
        <position position="90"/>
    </location>
</feature>
<feature type="modified residue" description="Phosphoserine; by host" evidence="1">
    <location>
        <position position="94"/>
    </location>
</feature>
<feature type="modified residue" description="Phosphoserine; by host" evidence="1">
    <location>
        <position position="108"/>
    </location>
</feature>
<feature type="cross-link" description="Glycyl lysine isopeptide (Lys-Gly) (interchain with G-Cter in SUMO)" evidence="1">
    <location>
        <position position="541"/>
    </location>
</feature>
<reference key="1">
    <citation type="submission" date="1995-10" db="EMBL/GenBank/DDBJ databases">
        <authorList>
            <person name="Delius H."/>
        </authorList>
    </citation>
    <scope>NUCLEOTIDE SEQUENCE [GENOMIC DNA]</scope>
</reference>
<name>VE1_HPV54</name>
<evidence type="ECO:0000255" key="1">
    <source>
        <dbReference type="HAMAP-Rule" id="MF_04000"/>
    </source>
</evidence>
<evidence type="ECO:0000256" key="2">
    <source>
        <dbReference type="SAM" id="MobiDB-lite"/>
    </source>
</evidence>
<protein>
    <recommendedName>
        <fullName evidence="1">Replication protein E1</fullName>
        <ecNumber evidence="1">5.6.2.4</ecNumber>
    </recommendedName>
    <alternativeName>
        <fullName evidence="1">ATP-dependent helicase E1</fullName>
    </alternativeName>
    <alternativeName>
        <fullName evidence="1">DNA 3'-5' helicase E1</fullName>
    </alternativeName>
</protein>
<organism>
    <name type="scientific">Human papillomavirus type 54</name>
    <dbReference type="NCBI Taxonomy" id="1671798"/>
    <lineage>
        <taxon>Viruses</taxon>
        <taxon>Monodnaviria</taxon>
        <taxon>Shotokuvirae</taxon>
        <taxon>Cossaviricota</taxon>
        <taxon>Papovaviricetes</taxon>
        <taxon>Zurhausenvirales</taxon>
        <taxon>Papillomaviridae</taxon>
        <taxon>Firstpapillomavirinae</taxon>
        <taxon>Alphapapillomavirus</taxon>
        <taxon>Alphapapillomavirus 13</taxon>
    </lineage>
</organism>
<accession>Q81020</accession>